<sequence length="115" mass="12646">MRMDGSDFEDRKVSKPSPVLPFDVSNIGDLSQGVHSPLGISHFDSKNPTPFGRSTKNSVYEYETVTPYSRFKVDKKFGSATSVSPVHTKAEEPGLGLTPMNSADFSNKIASRYRS</sequence>
<gene>
    <name type="primary">mug168</name>
    <name type="ORF">SPBC660.09</name>
</gene>
<comment type="function">
    <text evidence="2">Has a role in meiosis.</text>
</comment>
<comment type="subcellular location">
    <subcellularLocation>
        <location evidence="3">Nucleus</location>
    </subcellularLocation>
</comment>
<organism>
    <name type="scientific">Schizosaccharomyces pombe (strain 972 / ATCC 24843)</name>
    <name type="common">Fission yeast</name>
    <dbReference type="NCBI Taxonomy" id="284812"/>
    <lineage>
        <taxon>Eukaryota</taxon>
        <taxon>Fungi</taxon>
        <taxon>Dikarya</taxon>
        <taxon>Ascomycota</taxon>
        <taxon>Taphrinomycotina</taxon>
        <taxon>Schizosaccharomycetes</taxon>
        <taxon>Schizosaccharomycetales</taxon>
        <taxon>Schizosaccharomycetaceae</taxon>
        <taxon>Schizosaccharomyces</taxon>
    </lineage>
</organism>
<feature type="chain" id="PRO_0000116775" description="Meiotically up-regulated gene 168 protein">
    <location>
        <begin position="1"/>
        <end position="115"/>
    </location>
</feature>
<feature type="region of interest" description="Disordered" evidence="1">
    <location>
        <begin position="82"/>
        <end position="115"/>
    </location>
</feature>
<feature type="compositionally biased region" description="Polar residues" evidence="1">
    <location>
        <begin position="99"/>
        <end position="109"/>
    </location>
</feature>
<dbReference type="EMBL" id="CU329671">
    <property type="protein sequence ID" value="CAA22529.1"/>
    <property type="molecule type" value="Genomic_DNA"/>
</dbReference>
<dbReference type="PIR" id="T40621">
    <property type="entry name" value="T40621"/>
</dbReference>
<dbReference type="RefSeq" id="NP_595088.1">
    <property type="nucleotide sequence ID" value="NM_001020995.2"/>
</dbReference>
<dbReference type="STRING" id="284812.O94428"/>
<dbReference type="iPTMnet" id="O94428"/>
<dbReference type="PaxDb" id="4896-SPBC660.09.1"/>
<dbReference type="EnsemblFungi" id="SPBC660.09.1">
    <property type="protein sequence ID" value="SPBC660.09.1:pep"/>
    <property type="gene ID" value="SPBC660.09"/>
</dbReference>
<dbReference type="GeneID" id="2541138"/>
<dbReference type="KEGG" id="spo:2541138"/>
<dbReference type="PomBase" id="SPBC660.09">
    <property type="gene designation" value="mug168"/>
</dbReference>
<dbReference type="VEuPathDB" id="FungiDB:SPBC660.09"/>
<dbReference type="HOGENOM" id="CLU_2110390_0_0_1"/>
<dbReference type="InParanoid" id="O94428"/>
<dbReference type="PRO" id="PR:O94428"/>
<dbReference type="Proteomes" id="UP000002485">
    <property type="component" value="Chromosome II"/>
</dbReference>
<dbReference type="GO" id="GO:0005829">
    <property type="term" value="C:cytosol"/>
    <property type="evidence" value="ECO:0007005"/>
    <property type="project" value="PomBase"/>
</dbReference>
<dbReference type="GO" id="GO:0005634">
    <property type="term" value="C:nucleus"/>
    <property type="evidence" value="ECO:0007005"/>
    <property type="project" value="PomBase"/>
</dbReference>
<dbReference type="GO" id="GO:0051321">
    <property type="term" value="P:meiotic cell cycle"/>
    <property type="evidence" value="ECO:0007669"/>
    <property type="project" value="UniProtKB-KW"/>
</dbReference>
<keyword id="KW-0469">Meiosis</keyword>
<keyword id="KW-0539">Nucleus</keyword>
<keyword id="KW-1185">Reference proteome</keyword>
<name>MU168_SCHPO</name>
<proteinExistence type="evidence at protein level"/>
<protein>
    <recommendedName>
        <fullName>Meiotically up-regulated gene 168 protein</fullName>
    </recommendedName>
</protein>
<evidence type="ECO:0000256" key="1">
    <source>
        <dbReference type="SAM" id="MobiDB-lite"/>
    </source>
</evidence>
<evidence type="ECO:0000269" key="2">
    <source>
    </source>
</evidence>
<evidence type="ECO:0000269" key="3">
    <source>
    </source>
</evidence>
<reference key="1">
    <citation type="journal article" date="2002" name="Nature">
        <title>The genome sequence of Schizosaccharomyces pombe.</title>
        <authorList>
            <person name="Wood V."/>
            <person name="Gwilliam R."/>
            <person name="Rajandream M.A."/>
            <person name="Lyne M.H."/>
            <person name="Lyne R."/>
            <person name="Stewart A."/>
            <person name="Sgouros J.G."/>
            <person name="Peat N."/>
            <person name="Hayles J."/>
            <person name="Baker S.G."/>
            <person name="Basham D."/>
            <person name="Bowman S."/>
            <person name="Brooks K."/>
            <person name="Brown D."/>
            <person name="Brown S."/>
            <person name="Chillingworth T."/>
            <person name="Churcher C.M."/>
            <person name="Collins M."/>
            <person name="Connor R."/>
            <person name="Cronin A."/>
            <person name="Davis P."/>
            <person name="Feltwell T."/>
            <person name="Fraser A."/>
            <person name="Gentles S."/>
            <person name="Goble A."/>
            <person name="Hamlin N."/>
            <person name="Harris D.E."/>
            <person name="Hidalgo J."/>
            <person name="Hodgson G."/>
            <person name="Holroyd S."/>
            <person name="Hornsby T."/>
            <person name="Howarth S."/>
            <person name="Huckle E.J."/>
            <person name="Hunt S."/>
            <person name="Jagels K."/>
            <person name="James K.D."/>
            <person name="Jones L."/>
            <person name="Jones M."/>
            <person name="Leather S."/>
            <person name="McDonald S."/>
            <person name="McLean J."/>
            <person name="Mooney P."/>
            <person name="Moule S."/>
            <person name="Mungall K.L."/>
            <person name="Murphy L.D."/>
            <person name="Niblett D."/>
            <person name="Odell C."/>
            <person name="Oliver K."/>
            <person name="O'Neil S."/>
            <person name="Pearson D."/>
            <person name="Quail M.A."/>
            <person name="Rabbinowitsch E."/>
            <person name="Rutherford K.M."/>
            <person name="Rutter S."/>
            <person name="Saunders D."/>
            <person name="Seeger K."/>
            <person name="Sharp S."/>
            <person name="Skelton J."/>
            <person name="Simmonds M.N."/>
            <person name="Squares R."/>
            <person name="Squares S."/>
            <person name="Stevens K."/>
            <person name="Taylor K."/>
            <person name="Taylor R.G."/>
            <person name="Tivey A."/>
            <person name="Walsh S.V."/>
            <person name="Warren T."/>
            <person name="Whitehead S."/>
            <person name="Woodward J.R."/>
            <person name="Volckaert G."/>
            <person name="Aert R."/>
            <person name="Robben J."/>
            <person name="Grymonprez B."/>
            <person name="Weltjens I."/>
            <person name="Vanstreels E."/>
            <person name="Rieger M."/>
            <person name="Schaefer M."/>
            <person name="Mueller-Auer S."/>
            <person name="Gabel C."/>
            <person name="Fuchs M."/>
            <person name="Duesterhoeft A."/>
            <person name="Fritzc C."/>
            <person name="Holzer E."/>
            <person name="Moestl D."/>
            <person name="Hilbert H."/>
            <person name="Borzym K."/>
            <person name="Langer I."/>
            <person name="Beck A."/>
            <person name="Lehrach H."/>
            <person name="Reinhardt R."/>
            <person name="Pohl T.M."/>
            <person name="Eger P."/>
            <person name="Zimmermann W."/>
            <person name="Wedler H."/>
            <person name="Wambutt R."/>
            <person name="Purnelle B."/>
            <person name="Goffeau A."/>
            <person name="Cadieu E."/>
            <person name="Dreano S."/>
            <person name="Gloux S."/>
            <person name="Lelaure V."/>
            <person name="Mottier S."/>
            <person name="Galibert F."/>
            <person name="Aves S.J."/>
            <person name="Xiang Z."/>
            <person name="Hunt C."/>
            <person name="Moore K."/>
            <person name="Hurst S.M."/>
            <person name="Lucas M."/>
            <person name="Rochet M."/>
            <person name="Gaillardin C."/>
            <person name="Tallada V.A."/>
            <person name="Garzon A."/>
            <person name="Thode G."/>
            <person name="Daga R.R."/>
            <person name="Cruzado L."/>
            <person name="Jimenez J."/>
            <person name="Sanchez M."/>
            <person name="del Rey F."/>
            <person name="Benito J."/>
            <person name="Dominguez A."/>
            <person name="Revuelta J.L."/>
            <person name="Moreno S."/>
            <person name="Armstrong J."/>
            <person name="Forsburg S.L."/>
            <person name="Cerutti L."/>
            <person name="Lowe T."/>
            <person name="McCombie W.R."/>
            <person name="Paulsen I."/>
            <person name="Potashkin J."/>
            <person name="Shpakovski G.V."/>
            <person name="Ussery D."/>
            <person name="Barrell B.G."/>
            <person name="Nurse P."/>
        </authorList>
    </citation>
    <scope>NUCLEOTIDE SEQUENCE [LARGE SCALE GENOMIC DNA]</scope>
    <source>
        <strain>972 / ATCC 24843</strain>
    </source>
</reference>
<reference key="2">
    <citation type="journal article" date="2005" name="Curr. Biol.">
        <title>A large-scale screen in S. pombe identifies seven novel genes required for critical meiotic events.</title>
        <authorList>
            <person name="Martin-Castellanos C."/>
            <person name="Blanco M."/>
            <person name="Rozalen A.E."/>
            <person name="Perez-Hidalgo L."/>
            <person name="Garcia A.I."/>
            <person name="Conde F."/>
            <person name="Mata J."/>
            <person name="Ellermeier C."/>
            <person name="Davis L."/>
            <person name="San-Segundo P."/>
            <person name="Smith G.R."/>
            <person name="Moreno S."/>
        </authorList>
    </citation>
    <scope>FUNCTION IN MEIOSIS</scope>
</reference>
<reference key="3">
    <citation type="journal article" date="2006" name="Nat. Biotechnol.">
        <title>ORFeome cloning and global analysis of protein localization in the fission yeast Schizosaccharomyces pombe.</title>
        <authorList>
            <person name="Matsuyama A."/>
            <person name="Arai R."/>
            <person name="Yashiroda Y."/>
            <person name="Shirai A."/>
            <person name="Kamata A."/>
            <person name="Sekido S."/>
            <person name="Kobayashi Y."/>
            <person name="Hashimoto A."/>
            <person name="Hamamoto M."/>
            <person name="Hiraoka Y."/>
            <person name="Horinouchi S."/>
            <person name="Yoshida M."/>
        </authorList>
    </citation>
    <scope>SUBCELLULAR LOCATION [LARGE SCALE ANALYSIS]</scope>
</reference>
<accession>O94428</accession>